<dbReference type="EMBL" id="CP000233">
    <property type="protein sequence ID" value="ABD99381.1"/>
    <property type="molecule type" value="Genomic_DNA"/>
</dbReference>
<dbReference type="RefSeq" id="WP_011475823.1">
    <property type="nucleotide sequence ID" value="NC_007929.1"/>
</dbReference>
<dbReference type="RefSeq" id="YP_535464.1">
    <property type="nucleotide sequence ID" value="NC_007929.1"/>
</dbReference>
<dbReference type="SMR" id="Q1WUF4"/>
<dbReference type="STRING" id="362948.LSL_0572"/>
<dbReference type="KEGG" id="lsl:LSL_0572"/>
<dbReference type="PATRIC" id="fig|362948.14.peg.651"/>
<dbReference type="HOGENOM" id="CLU_006301_5_1_9"/>
<dbReference type="OrthoDB" id="9811804at2"/>
<dbReference type="Proteomes" id="UP000006559">
    <property type="component" value="Chromosome"/>
</dbReference>
<dbReference type="GO" id="GO:0005829">
    <property type="term" value="C:cytosol"/>
    <property type="evidence" value="ECO:0007669"/>
    <property type="project" value="TreeGrafter"/>
</dbReference>
<dbReference type="GO" id="GO:0005525">
    <property type="term" value="F:GTP binding"/>
    <property type="evidence" value="ECO:0007669"/>
    <property type="project" value="UniProtKB-KW"/>
</dbReference>
<dbReference type="GO" id="GO:0003924">
    <property type="term" value="F:GTPase activity"/>
    <property type="evidence" value="ECO:0007669"/>
    <property type="project" value="UniProtKB-UniRule"/>
</dbReference>
<dbReference type="GO" id="GO:0003743">
    <property type="term" value="F:translation initiation factor activity"/>
    <property type="evidence" value="ECO:0007669"/>
    <property type="project" value="UniProtKB-UniRule"/>
</dbReference>
<dbReference type="CDD" id="cd01887">
    <property type="entry name" value="IF2_eIF5B"/>
    <property type="match status" value="1"/>
</dbReference>
<dbReference type="CDD" id="cd03702">
    <property type="entry name" value="IF2_mtIF2_II"/>
    <property type="match status" value="1"/>
</dbReference>
<dbReference type="CDD" id="cd03692">
    <property type="entry name" value="mtIF2_IVc"/>
    <property type="match status" value="1"/>
</dbReference>
<dbReference type="FunFam" id="2.40.30.10:FF:000007">
    <property type="entry name" value="Translation initiation factor IF-2"/>
    <property type="match status" value="1"/>
</dbReference>
<dbReference type="FunFam" id="2.40.30.10:FF:000008">
    <property type="entry name" value="Translation initiation factor IF-2"/>
    <property type="match status" value="1"/>
</dbReference>
<dbReference type="FunFam" id="3.40.50.10050:FF:000001">
    <property type="entry name" value="Translation initiation factor IF-2"/>
    <property type="match status" value="1"/>
</dbReference>
<dbReference type="FunFam" id="3.40.50.300:FF:000019">
    <property type="entry name" value="Translation initiation factor IF-2"/>
    <property type="match status" value="1"/>
</dbReference>
<dbReference type="Gene3D" id="1.10.10.2480">
    <property type="match status" value="1"/>
</dbReference>
<dbReference type="Gene3D" id="3.40.50.300">
    <property type="entry name" value="P-loop containing nucleotide triphosphate hydrolases"/>
    <property type="match status" value="1"/>
</dbReference>
<dbReference type="Gene3D" id="2.40.30.10">
    <property type="entry name" value="Translation factors"/>
    <property type="match status" value="2"/>
</dbReference>
<dbReference type="Gene3D" id="3.40.50.10050">
    <property type="entry name" value="Translation initiation factor IF- 2, domain 3"/>
    <property type="match status" value="1"/>
</dbReference>
<dbReference type="HAMAP" id="MF_00100_B">
    <property type="entry name" value="IF_2_B"/>
    <property type="match status" value="1"/>
</dbReference>
<dbReference type="InterPro" id="IPR053905">
    <property type="entry name" value="EF-G-like_DII"/>
</dbReference>
<dbReference type="InterPro" id="IPR044145">
    <property type="entry name" value="IF2_II"/>
</dbReference>
<dbReference type="InterPro" id="IPR006847">
    <property type="entry name" value="IF2_N"/>
</dbReference>
<dbReference type="InterPro" id="IPR027417">
    <property type="entry name" value="P-loop_NTPase"/>
</dbReference>
<dbReference type="InterPro" id="IPR005225">
    <property type="entry name" value="Small_GTP-bd"/>
</dbReference>
<dbReference type="InterPro" id="IPR000795">
    <property type="entry name" value="T_Tr_GTP-bd_dom"/>
</dbReference>
<dbReference type="InterPro" id="IPR000178">
    <property type="entry name" value="TF_IF2_bacterial-like"/>
</dbReference>
<dbReference type="InterPro" id="IPR015760">
    <property type="entry name" value="TIF_IF2"/>
</dbReference>
<dbReference type="InterPro" id="IPR023115">
    <property type="entry name" value="TIF_IF2_dom3"/>
</dbReference>
<dbReference type="InterPro" id="IPR036925">
    <property type="entry name" value="TIF_IF2_dom3_sf"/>
</dbReference>
<dbReference type="InterPro" id="IPR009000">
    <property type="entry name" value="Transl_B-barrel_sf"/>
</dbReference>
<dbReference type="NCBIfam" id="TIGR00487">
    <property type="entry name" value="IF-2"/>
    <property type="match status" value="1"/>
</dbReference>
<dbReference type="NCBIfam" id="TIGR00231">
    <property type="entry name" value="small_GTP"/>
    <property type="match status" value="1"/>
</dbReference>
<dbReference type="PANTHER" id="PTHR43381:SF5">
    <property type="entry name" value="TR-TYPE G DOMAIN-CONTAINING PROTEIN"/>
    <property type="match status" value="1"/>
</dbReference>
<dbReference type="PANTHER" id="PTHR43381">
    <property type="entry name" value="TRANSLATION INITIATION FACTOR IF-2-RELATED"/>
    <property type="match status" value="1"/>
</dbReference>
<dbReference type="Pfam" id="PF22042">
    <property type="entry name" value="EF-G_D2"/>
    <property type="match status" value="1"/>
</dbReference>
<dbReference type="Pfam" id="PF00009">
    <property type="entry name" value="GTP_EFTU"/>
    <property type="match status" value="1"/>
</dbReference>
<dbReference type="Pfam" id="PF11987">
    <property type="entry name" value="IF-2"/>
    <property type="match status" value="1"/>
</dbReference>
<dbReference type="Pfam" id="PF04760">
    <property type="entry name" value="IF2_N"/>
    <property type="match status" value="2"/>
</dbReference>
<dbReference type="SUPFAM" id="SSF52156">
    <property type="entry name" value="Initiation factor IF2/eIF5b, domain 3"/>
    <property type="match status" value="1"/>
</dbReference>
<dbReference type="SUPFAM" id="SSF52540">
    <property type="entry name" value="P-loop containing nucleoside triphosphate hydrolases"/>
    <property type="match status" value="1"/>
</dbReference>
<dbReference type="SUPFAM" id="SSF50447">
    <property type="entry name" value="Translation proteins"/>
    <property type="match status" value="2"/>
</dbReference>
<dbReference type="PROSITE" id="PS51722">
    <property type="entry name" value="G_TR_2"/>
    <property type="match status" value="1"/>
</dbReference>
<dbReference type="PROSITE" id="PS01176">
    <property type="entry name" value="IF2"/>
    <property type="match status" value="1"/>
</dbReference>
<sequence length="737" mass="82194">MVKKRIYELAKELGISSERVIEIAKKYDFKVTNHMSALDENEQNKIRGSISLKAKKKEHIQHNKNKDNFHSKKVQKSNTGSKDENNHKNVHKNNRKRSGSSMKENNNAKNGQRNNRNNRSNNKFKNKRNNNNKRNNNFKKGNPVPPRKNKPLPETLVYTVGMNVADIAKKIHREPAEIIKKLFMMGVMVNQNQSLDKDTIELLAADYGINAEEKVEVDVSDIDKFFEEEQNNTEHLEKRPPVVTIMGHVDHGKTTLLDKLRHTHVTEGEAGGITQHIGAYQVRHDDKIITFLDTPGHAAFTNMRARGADITDITVLVVAADDGVMPQTIEAINHAKAAGVPIIVAVNKIDKPGANPNHVMEQLTEYELIPESWGGDTIFVEISAKFGKNLDELLDMILLEAEMLELHANPNQRGAGSVIEARLDKGKGSVASLLVQQGTLHVGDPIVVGNTFGRVRTMVDARGYDIKKATPATPVEITGLNEVPDSGDRFITFEDEKTARAAGEKRAERALLKERSQTNHVTLDNLFDTLKEGELKEVGVIIKADVQGSVEALAQSFKKIDVEGVRVNIIHQAVGAINESDVTLAEASNAIIVGFNVRPTPLAKQQAESDNVDIRLHRVIYKAIDEIETAMKGMLEPEYQEKITGQVEIRQTYKVSKLGTIGGGYVIDGYIRRDSGVRVIRDGIVIYEGKLASLKRFKDDVKEVKQGYECGLMIEKYNDIKVGDQIEAYIMEEVPVD</sequence>
<evidence type="ECO:0000250" key="1"/>
<evidence type="ECO:0000255" key="2">
    <source>
        <dbReference type="HAMAP-Rule" id="MF_00100"/>
    </source>
</evidence>
<evidence type="ECO:0000256" key="3">
    <source>
        <dbReference type="SAM" id="MobiDB-lite"/>
    </source>
</evidence>
<name>IF2_LIGS1</name>
<proteinExistence type="inferred from homology"/>
<accession>Q1WUF4</accession>
<protein>
    <recommendedName>
        <fullName evidence="2">Translation initiation factor IF-2</fullName>
    </recommendedName>
</protein>
<comment type="function">
    <text evidence="2">One of the essential components for the initiation of protein synthesis. Protects formylmethionyl-tRNA from spontaneous hydrolysis and promotes its binding to the 30S ribosomal subunits. Also involved in the hydrolysis of GTP during the formation of the 70S ribosomal complex.</text>
</comment>
<comment type="subcellular location">
    <subcellularLocation>
        <location evidence="2">Cytoplasm</location>
    </subcellularLocation>
</comment>
<comment type="similarity">
    <text evidence="2">Belongs to the TRAFAC class translation factor GTPase superfamily. Classic translation factor GTPase family. IF-2 subfamily.</text>
</comment>
<reference key="1">
    <citation type="journal article" date="2006" name="Proc. Natl. Acad. Sci. U.S.A.">
        <title>Multireplicon genome architecture of Lactobacillus salivarius.</title>
        <authorList>
            <person name="Claesson M.J."/>
            <person name="Li Y."/>
            <person name="Leahy S."/>
            <person name="Canchaya C."/>
            <person name="van Pijkeren J.P."/>
            <person name="Cerdeno-Tarraga A.M."/>
            <person name="Parkhill J."/>
            <person name="Flynn S."/>
            <person name="O'Sullivan G.C."/>
            <person name="Collins J.K."/>
            <person name="Higgins D."/>
            <person name="Shanahan F."/>
            <person name="Fitzgerald G.F."/>
            <person name="van Sinderen D."/>
            <person name="O'Toole P.W."/>
        </authorList>
    </citation>
    <scope>NUCLEOTIDE SEQUENCE [LARGE SCALE GENOMIC DNA]</scope>
    <source>
        <strain>UCC118</strain>
    </source>
</reference>
<organism>
    <name type="scientific">Ligilactobacillus salivarius (strain UCC118)</name>
    <name type="common">Lactobacillus salivarius</name>
    <dbReference type="NCBI Taxonomy" id="362948"/>
    <lineage>
        <taxon>Bacteria</taxon>
        <taxon>Bacillati</taxon>
        <taxon>Bacillota</taxon>
        <taxon>Bacilli</taxon>
        <taxon>Lactobacillales</taxon>
        <taxon>Lactobacillaceae</taxon>
        <taxon>Ligilactobacillus</taxon>
    </lineage>
</organism>
<keyword id="KW-0963">Cytoplasm</keyword>
<keyword id="KW-0342">GTP-binding</keyword>
<keyword id="KW-0396">Initiation factor</keyword>
<keyword id="KW-0547">Nucleotide-binding</keyword>
<keyword id="KW-0648">Protein biosynthesis</keyword>
<keyword id="KW-1185">Reference proteome</keyword>
<feature type="chain" id="PRO_1000008262" description="Translation initiation factor IF-2">
    <location>
        <begin position="1"/>
        <end position="737"/>
    </location>
</feature>
<feature type="domain" description="tr-type G">
    <location>
        <begin position="238"/>
        <end position="407"/>
    </location>
</feature>
<feature type="region of interest" description="Disordered" evidence="3">
    <location>
        <begin position="55"/>
        <end position="152"/>
    </location>
</feature>
<feature type="region of interest" description="G1" evidence="1">
    <location>
        <begin position="247"/>
        <end position="254"/>
    </location>
</feature>
<feature type="region of interest" description="G2" evidence="1">
    <location>
        <begin position="272"/>
        <end position="276"/>
    </location>
</feature>
<feature type="region of interest" description="G3" evidence="1">
    <location>
        <begin position="293"/>
        <end position="296"/>
    </location>
</feature>
<feature type="region of interest" description="G4" evidence="1">
    <location>
        <begin position="347"/>
        <end position="350"/>
    </location>
</feature>
<feature type="region of interest" description="G5" evidence="1">
    <location>
        <begin position="383"/>
        <end position="385"/>
    </location>
</feature>
<feature type="compositionally biased region" description="Basic and acidic residues" evidence="3">
    <location>
        <begin position="60"/>
        <end position="70"/>
    </location>
</feature>
<feature type="compositionally biased region" description="Basic residues" evidence="3">
    <location>
        <begin position="88"/>
        <end position="98"/>
    </location>
</feature>
<feature type="compositionally biased region" description="Low complexity" evidence="3">
    <location>
        <begin position="105"/>
        <end position="121"/>
    </location>
</feature>
<feature type="compositionally biased region" description="Basic residues" evidence="3">
    <location>
        <begin position="122"/>
        <end position="131"/>
    </location>
</feature>
<feature type="compositionally biased region" description="Low complexity" evidence="3">
    <location>
        <begin position="132"/>
        <end position="142"/>
    </location>
</feature>
<feature type="binding site" evidence="2">
    <location>
        <begin position="247"/>
        <end position="254"/>
    </location>
    <ligand>
        <name>GTP</name>
        <dbReference type="ChEBI" id="CHEBI:37565"/>
    </ligand>
</feature>
<feature type="binding site" evidence="2">
    <location>
        <begin position="293"/>
        <end position="297"/>
    </location>
    <ligand>
        <name>GTP</name>
        <dbReference type="ChEBI" id="CHEBI:37565"/>
    </ligand>
</feature>
<feature type="binding site" evidence="2">
    <location>
        <begin position="347"/>
        <end position="350"/>
    </location>
    <ligand>
        <name>GTP</name>
        <dbReference type="ChEBI" id="CHEBI:37565"/>
    </ligand>
</feature>
<gene>
    <name evidence="2" type="primary">infB</name>
    <name type="ordered locus">LSL_0572</name>
</gene>